<accession>B2TII6</accession>
<name>RL24_CLOBB</name>
<keyword id="KW-0687">Ribonucleoprotein</keyword>
<keyword id="KW-0689">Ribosomal protein</keyword>
<keyword id="KW-0694">RNA-binding</keyword>
<keyword id="KW-0699">rRNA-binding</keyword>
<evidence type="ECO:0000255" key="1">
    <source>
        <dbReference type="HAMAP-Rule" id="MF_01326"/>
    </source>
</evidence>
<evidence type="ECO:0000305" key="2"/>
<dbReference type="EMBL" id="CP001056">
    <property type="protein sequence ID" value="ACD25035.1"/>
    <property type="molecule type" value="Genomic_DNA"/>
</dbReference>
<dbReference type="SMR" id="B2TII6"/>
<dbReference type="KEGG" id="cbk:CLL_A0249"/>
<dbReference type="PATRIC" id="fig|935198.13.peg.224"/>
<dbReference type="HOGENOM" id="CLU_093315_2_3_9"/>
<dbReference type="Proteomes" id="UP000001195">
    <property type="component" value="Chromosome"/>
</dbReference>
<dbReference type="GO" id="GO:1990904">
    <property type="term" value="C:ribonucleoprotein complex"/>
    <property type="evidence" value="ECO:0007669"/>
    <property type="project" value="UniProtKB-KW"/>
</dbReference>
<dbReference type="GO" id="GO:0005840">
    <property type="term" value="C:ribosome"/>
    <property type="evidence" value="ECO:0007669"/>
    <property type="project" value="UniProtKB-KW"/>
</dbReference>
<dbReference type="GO" id="GO:0019843">
    <property type="term" value="F:rRNA binding"/>
    <property type="evidence" value="ECO:0007669"/>
    <property type="project" value="UniProtKB-UniRule"/>
</dbReference>
<dbReference type="GO" id="GO:0003735">
    <property type="term" value="F:structural constituent of ribosome"/>
    <property type="evidence" value="ECO:0007669"/>
    <property type="project" value="InterPro"/>
</dbReference>
<dbReference type="GO" id="GO:0006412">
    <property type="term" value="P:translation"/>
    <property type="evidence" value="ECO:0007669"/>
    <property type="project" value="UniProtKB-UniRule"/>
</dbReference>
<dbReference type="CDD" id="cd06089">
    <property type="entry name" value="KOW_RPL26"/>
    <property type="match status" value="1"/>
</dbReference>
<dbReference type="FunFam" id="2.30.30.30:FF:000004">
    <property type="entry name" value="50S ribosomal protein L24"/>
    <property type="match status" value="1"/>
</dbReference>
<dbReference type="Gene3D" id="2.30.30.30">
    <property type="match status" value="1"/>
</dbReference>
<dbReference type="HAMAP" id="MF_01326_B">
    <property type="entry name" value="Ribosomal_uL24_B"/>
    <property type="match status" value="1"/>
</dbReference>
<dbReference type="InterPro" id="IPR005824">
    <property type="entry name" value="KOW"/>
</dbReference>
<dbReference type="InterPro" id="IPR014722">
    <property type="entry name" value="Rib_uL2_dom2"/>
</dbReference>
<dbReference type="InterPro" id="IPR003256">
    <property type="entry name" value="Ribosomal_uL24"/>
</dbReference>
<dbReference type="InterPro" id="IPR041988">
    <property type="entry name" value="Ribosomal_uL24_KOW"/>
</dbReference>
<dbReference type="InterPro" id="IPR008991">
    <property type="entry name" value="Translation_prot_SH3-like_sf"/>
</dbReference>
<dbReference type="NCBIfam" id="TIGR01079">
    <property type="entry name" value="rplX_bact"/>
    <property type="match status" value="1"/>
</dbReference>
<dbReference type="PANTHER" id="PTHR12903">
    <property type="entry name" value="MITOCHONDRIAL RIBOSOMAL PROTEIN L24"/>
    <property type="match status" value="1"/>
</dbReference>
<dbReference type="Pfam" id="PF00467">
    <property type="entry name" value="KOW"/>
    <property type="match status" value="1"/>
</dbReference>
<dbReference type="Pfam" id="PF17136">
    <property type="entry name" value="ribosomal_L24"/>
    <property type="match status" value="1"/>
</dbReference>
<dbReference type="SMART" id="SM00739">
    <property type="entry name" value="KOW"/>
    <property type="match status" value="1"/>
</dbReference>
<dbReference type="SUPFAM" id="SSF50104">
    <property type="entry name" value="Translation proteins SH3-like domain"/>
    <property type="match status" value="1"/>
</dbReference>
<feature type="chain" id="PRO_0000355659" description="Large ribosomal subunit protein uL24">
    <location>
        <begin position="1"/>
        <end position="104"/>
    </location>
</feature>
<proteinExistence type="inferred from homology"/>
<protein>
    <recommendedName>
        <fullName evidence="1">Large ribosomal subunit protein uL24</fullName>
    </recommendedName>
    <alternativeName>
        <fullName evidence="2">50S ribosomal protein L24</fullName>
    </alternativeName>
</protein>
<gene>
    <name evidence="1" type="primary">rplX</name>
    <name type="ordered locus">CLL_A0249</name>
</gene>
<comment type="function">
    <text evidence="1">One of two assembly initiator proteins, it binds directly to the 5'-end of the 23S rRNA, where it nucleates assembly of the 50S subunit.</text>
</comment>
<comment type="function">
    <text evidence="1">One of the proteins that surrounds the polypeptide exit tunnel on the outside of the subunit.</text>
</comment>
<comment type="subunit">
    <text evidence="1">Part of the 50S ribosomal subunit.</text>
</comment>
<comment type="similarity">
    <text evidence="1">Belongs to the universal ribosomal protein uL24 family.</text>
</comment>
<reference key="1">
    <citation type="submission" date="2008-04" db="EMBL/GenBank/DDBJ databases">
        <title>Complete sequence of Clostridium botulinum strain Eklund.</title>
        <authorList>
            <person name="Brinkac L.M."/>
            <person name="Brown J.L."/>
            <person name="Bruce D."/>
            <person name="Detter C."/>
            <person name="Munk C."/>
            <person name="Smith L.A."/>
            <person name="Smith T.J."/>
            <person name="Sutton G."/>
            <person name="Brettin T.S."/>
        </authorList>
    </citation>
    <scope>NUCLEOTIDE SEQUENCE [LARGE SCALE GENOMIC DNA]</scope>
    <source>
        <strain>Eklund 17B / Type B</strain>
    </source>
</reference>
<sequence length="104" mass="11477">MKVHVRKSDTVVVISGKDKGKTGEVLKVYPKTGKVLVQGINIVKKHQKANKSQVESAIIEREAAINSSKVMLYCNKCKNATRIASKILDDGTKVRVCKKCSETF</sequence>
<organism>
    <name type="scientific">Clostridium botulinum (strain Eklund 17B / Type B)</name>
    <dbReference type="NCBI Taxonomy" id="935198"/>
    <lineage>
        <taxon>Bacteria</taxon>
        <taxon>Bacillati</taxon>
        <taxon>Bacillota</taxon>
        <taxon>Clostridia</taxon>
        <taxon>Eubacteriales</taxon>
        <taxon>Clostridiaceae</taxon>
        <taxon>Clostridium</taxon>
    </lineage>
</organism>